<feature type="chain" id="PRO_0000433566" description="Transcription factor atoh8">
    <location>
        <begin position="1"/>
        <end position="266"/>
    </location>
</feature>
<feature type="domain" description="bHLH" evidence="3">
    <location>
        <begin position="175"/>
        <end position="227"/>
    </location>
</feature>
<feature type="region of interest" description="Disordered" evidence="4">
    <location>
        <begin position="140"/>
        <end position="164"/>
    </location>
</feature>
<feature type="region of interest" description="Basic motif; degenerate" evidence="3">
    <location>
        <begin position="175"/>
        <end position="188"/>
    </location>
</feature>
<feature type="region of interest" description="Helix-loop-helix motif" evidence="3">
    <location>
        <begin position="189"/>
        <end position="227"/>
    </location>
</feature>
<feature type="compositionally biased region" description="Basic and acidic residues" evidence="4">
    <location>
        <begin position="150"/>
        <end position="160"/>
    </location>
</feature>
<organism>
    <name type="scientific">Danio rerio</name>
    <name type="common">Zebrafish</name>
    <name type="synonym">Brachydanio rerio</name>
    <dbReference type="NCBI Taxonomy" id="7955"/>
    <lineage>
        <taxon>Eukaryota</taxon>
        <taxon>Metazoa</taxon>
        <taxon>Chordata</taxon>
        <taxon>Craniata</taxon>
        <taxon>Vertebrata</taxon>
        <taxon>Euteleostomi</taxon>
        <taxon>Actinopterygii</taxon>
        <taxon>Neopterygii</taxon>
        <taxon>Teleostei</taxon>
        <taxon>Ostariophysi</taxon>
        <taxon>Cypriniformes</taxon>
        <taxon>Danionidae</taxon>
        <taxon>Danioninae</taxon>
        <taxon>Danio</taxon>
    </lineage>
</organism>
<reference key="1">
    <citation type="journal article" date="2010" name="PLoS ONE">
        <title>Atoh8, a bHLH transcription factor, is required for the development of retina and skeletal muscle in zebrafish.</title>
        <authorList>
            <person name="Yao J."/>
            <person name="Zhou J."/>
            <person name="Liu Q."/>
            <person name="Lu D."/>
            <person name="Wang L."/>
            <person name="Qiao X."/>
            <person name="Jia W."/>
        </authorList>
    </citation>
    <scope>NUCLEOTIDE SEQUENCE [MRNA]</scope>
    <scope>DEVELOPMENTAL STAGE</scope>
    <scope>DISRUPTION PHENOTYPE</scope>
    <scope>FUNCTION</scope>
</reference>
<reference key="2">
    <citation type="journal article" date="2013" name="Nature">
        <title>The zebrafish reference genome sequence and its relationship to the human genome.</title>
        <authorList>
            <person name="Howe K."/>
            <person name="Clark M.D."/>
            <person name="Torroja C.F."/>
            <person name="Torrance J."/>
            <person name="Berthelot C."/>
            <person name="Muffato M."/>
            <person name="Collins J.E."/>
            <person name="Humphray S."/>
            <person name="McLaren K."/>
            <person name="Matthews L."/>
            <person name="McLaren S."/>
            <person name="Sealy I."/>
            <person name="Caccamo M."/>
            <person name="Churcher C."/>
            <person name="Scott C."/>
            <person name="Barrett J.C."/>
            <person name="Koch R."/>
            <person name="Rauch G.J."/>
            <person name="White S."/>
            <person name="Chow W."/>
            <person name="Kilian B."/>
            <person name="Quintais L.T."/>
            <person name="Guerra-Assuncao J.A."/>
            <person name="Zhou Y."/>
            <person name="Gu Y."/>
            <person name="Yen J."/>
            <person name="Vogel J.H."/>
            <person name="Eyre T."/>
            <person name="Redmond S."/>
            <person name="Banerjee R."/>
            <person name="Chi J."/>
            <person name="Fu B."/>
            <person name="Langley E."/>
            <person name="Maguire S.F."/>
            <person name="Laird G.K."/>
            <person name="Lloyd D."/>
            <person name="Kenyon E."/>
            <person name="Donaldson S."/>
            <person name="Sehra H."/>
            <person name="Almeida-King J."/>
            <person name="Loveland J."/>
            <person name="Trevanion S."/>
            <person name="Jones M."/>
            <person name="Quail M."/>
            <person name="Willey D."/>
            <person name="Hunt A."/>
            <person name="Burton J."/>
            <person name="Sims S."/>
            <person name="McLay K."/>
            <person name="Plumb B."/>
            <person name="Davis J."/>
            <person name="Clee C."/>
            <person name="Oliver K."/>
            <person name="Clark R."/>
            <person name="Riddle C."/>
            <person name="Elliot D."/>
            <person name="Threadgold G."/>
            <person name="Harden G."/>
            <person name="Ware D."/>
            <person name="Begum S."/>
            <person name="Mortimore B."/>
            <person name="Kerry G."/>
            <person name="Heath P."/>
            <person name="Phillimore B."/>
            <person name="Tracey A."/>
            <person name="Corby N."/>
            <person name="Dunn M."/>
            <person name="Johnson C."/>
            <person name="Wood J."/>
            <person name="Clark S."/>
            <person name="Pelan S."/>
            <person name="Griffiths G."/>
            <person name="Smith M."/>
            <person name="Glithero R."/>
            <person name="Howden P."/>
            <person name="Barker N."/>
            <person name="Lloyd C."/>
            <person name="Stevens C."/>
            <person name="Harley J."/>
            <person name="Holt K."/>
            <person name="Panagiotidis G."/>
            <person name="Lovell J."/>
            <person name="Beasley H."/>
            <person name="Henderson C."/>
            <person name="Gordon D."/>
            <person name="Auger K."/>
            <person name="Wright D."/>
            <person name="Collins J."/>
            <person name="Raisen C."/>
            <person name="Dyer L."/>
            <person name="Leung K."/>
            <person name="Robertson L."/>
            <person name="Ambridge K."/>
            <person name="Leongamornlert D."/>
            <person name="McGuire S."/>
            <person name="Gilderthorp R."/>
            <person name="Griffiths C."/>
            <person name="Manthravadi D."/>
            <person name="Nichol S."/>
            <person name="Barker G."/>
            <person name="Whitehead S."/>
            <person name="Kay M."/>
            <person name="Brown J."/>
            <person name="Murnane C."/>
            <person name="Gray E."/>
            <person name="Humphries M."/>
            <person name="Sycamore N."/>
            <person name="Barker D."/>
            <person name="Saunders D."/>
            <person name="Wallis J."/>
            <person name="Babbage A."/>
            <person name="Hammond S."/>
            <person name="Mashreghi-Mohammadi M."/>
            <person name="Barr L."/>
            <person name="Martin S."/>
            <person name="Wray P."/>
            <person name="Ellington A."/>
            <person name="Matthews N."/>
            <person name="Ellwood M."/>
            <person name="Woodmansey R."/>
            <person name="Clark G."/>
            <person name="Cooper J."/>
            <person name="Tromans A."/>
            <person name="Grafham D."/>
            <person name="Skuce C."/>
            <person name="Pandian R."/>
            <person name="Andrews R."/>
            <person name="Harrison E."/>
            <person name="Kimberley A."/>
            <person name="Garnett J."/>
            <person name="Fosker N."/>
            <person name="Hall R."/>
            <person name="Garner P."/>
            <person name="Kelly D."/>
            <person name="Bird C."/>
            <person name="Palmer S."/>
            <person name="Gehring I."/>
            <person name="Berger A."/>
            <person name="Dooley C.M."/>
            <person name="Ersan-Urun Z."/>
            <person name="Eser C."/>
            <person name="Geiger H."/>
            <person name="Geisler M."/>
            <person name="Karotki L."/>
            <person name="Kirn A."/>
            <person name="Konantz J."/>
            <person name="Konantz M."/>
            <person name="Oberlander M."/>
            <person name="Rudolph-Geiger S."/>
            <person name="Teucke M."/>
            <person name="Lanz C."/>
            <person name="Raddatz G."/>
            <person name="Osoegawa K."/>
            <person name="Zhu B."/>
            <person name="Rapp A."/>
            <person name="Widaa S."/>
            <person name="Langford C."/>
            <person name="Yang F."/>
            <person name="Schuster S.C."/>
            <person name="Carter N.P."/>
            <person name="Harrow J."/>
            <person name="Ning Z."/>
            <person name="Herrero J."/>
            <person name="Searle S.M."/>
            <person name="Enright A."/>
            <person name="Geisler R."/>
            <person name="Plasterk R.H."/>
            <person name="Lee C."/>
            <person name="Westerfield M."/>
            <person name="de Jong P.J."/>
            <person name="Zon L.I."/>
            <person name="Postlethwait J.H."/>
            <person name="Nusslein-Volhard C."/>
            <person name="Hubbard T.J."/>
            <person name="Roest Crollius H."/>
            <person name="Rogers J."/>
            <person name="Stemple D.L."/>
        </authorList>
    </citation>
    <scope>NUCLEOTIDE SEQUENCE [LARGE SCALE GENOMIC DNA]</scope>
    <source>
        <strain>Tuebingen</strain>
    </source>
</reference>
<reference key="3">
    <citation type="journal article" date="2013" name="J. Biol. Chem.">
        <title>The transcription factor Atonal homolog 8 regulates Gata4 and Friend of Gata-2 during vertebrate development.</title>
        <authorList>
            <person name="Rawnsley D.R."/>
            <person name="Xiao J."/>
            <person name="Lee J.S."/>
            <person name="Liu X."/>
            <person name="Mericko-Ishizuka P."/>
            <person name="Kumar V."/>
            <person name="He J."/>
            <person name="Basu A."/>
            <person name="Lu M."/>
            <person name="Lynn F.C."/>
            <person name="Pack M."/>
            <person name="Gasa R."/>
            <person name="Kahn M.L."/>
        </authorList>
    </citation>
    <scope>FUNCTION</scope>
    <scope>DEVELOPMENTAL STAGE</scope>
</reference>
<gene>
    <name evidence="8" type="primary">atoh8</name>
    <name evidence="8" type="ORF">zgc:158314</name>
</gene>
<keyword id="KW-0963">Cytoplasm</keyword>
<keyword id="KW-0217">Developmental protein</keyword>
<keyword id="KW-0221">Differentiation</keyword>
<keyword id="KW-0238">DNA-binding</keyword>
<keyword id="KW-0524">Neurogenesis</keyword>
<keyword id="KW-0539">Nucleus</keyword>
<keyword id="KW-1185">Reference proteome</keyword>
<keyword id="KW-0804">Transcription</keyword>
<keyword id="KW-0805">Transcription regulation</keyword>
<evidence type="ECO:0000250" key="1">
    <source>
        <dbReference type="UniProtKB" id="Q96SQ7"/>
    </source>
</evidence>
<evidence type="ECO:0000250" key="2">
    <source>
        <dbReference type="UniProtKB" id="Q99NA2"/>
    </source>
</evidence>
<evidence type="ECO:0000255" key="3">
    <source>
        <dbReference type="PROSITE-ProRule" id="PRU00981"/>
    </source>
</evidence>
<evidence type="ECO:0000256" key="4">
    <source>
        <dbReference type="SAM" id="MobiDB-lite"/>
    </source>
</evidence>
<evidence type="ECO:0000269" key="5">
    <source>
    </source>
</evidence>
<evidence type="ECO:0000269" key="6">
    <source>
    </source>
</evidence>
<evidence type="ECO:0000305" key="7"/>
<evidence type="ECO:0000312" key="8">
    <source>
        <dbReference type="ZFIN" id="ZDB-GENE-061215-7"/>
    </source>
</evidence>
<dbReference type="EMBL" id="EU272033">
    <property type="protein sequence ID" value="ABY90093.1"/>
    <property type="molecule type" value="mRNA"/>
</dbReference>
<dbReference type="EMBL" id="BX957231">
    <property type="status" value="NOT_ANNOTATED_CDS"/>
    <property type="molecule type" value="Genomic_DNA"/>
</dbReference>
<dbReference type="RefSeq" id="NP_001073460.2">
    <property type="nucleotide sequence ID" value="NM_001079991.2"/>
</dbReference>
<dbReference type="SMR" id="D2CLZ9"/>
<dbReference type="STRING" id="7955.ENSDARP00000054688"/>
<dbReference type="PaxDb" id="7955-ENSDARP00000054688"/>
<dbReference type="Ensembl" id="ENSDART00000054689">
    <property type="protein sequence ID" value="ENSDARP00000054688"/>
    <property type="gene ID" value="ENSDARG00000037555"/>
</dbReference>
<dbReference type="GeneID" id="561606"/>
<dbReference type="KEGG" id="dre:561606"/>
<dbReference type="AGR" id="ZFIN:ZDB-GENE-061215-7"/>
<dbReference type="CTD" id="84913"/>
<dbReference type="ZFIN" id="ZDB-GENE-061215-7">
    <property type="gene designation" value="atoh8"/>
</dbReference>
<dbReference type="eggNOG" id="KOG3898">
    <property type="taxonomic scope" value="Eukaryota"/>
</dbReference>
<dbReference type="HOGENOM" id="CLU_057987_0_0_1"/>
<dbReference type="InParanoid" id="D2CLZ9"/>
<dbReference type="OrthoDB" id="10001938at2759"/>
<dbReference type="PhylomeDB" id="D2CLZ9"/>
<dbReference type="TreeFam" id="TF324848"/>
<dbReference type="PRO" id="PR:D2CLZ9"/>
<dbReference type="Proteomes" id="UP000000437">
    <property type="component" value="Alternate scaffold 14"/>
</dbReference>
<dbReference type="Proteomes" id="UP000000437">
    <property type="component" value="Chromosome 14"/>
</dbReference>
<dbReference type="Bgee" id="ENSDARG00000037555">
    <property type="expression patterns" value="Expressed in spleen and 22 other cell types or tissues"/>
</dbReference>
<dbReference type="GO" id="GO:0005737">
    <property type="term" value="C:cytoplasm"/>
    <property type="evidence" value="ECO:0007669"/>
    <property type="project" value="UniProtKB-SubCell"/>
</dbReference>
<dbReference type="GO" id="GO:0016607">
    <property type="term" value="C:nuclear speck"/>
    <property type="evidence" value="ECO:0007669"/>
    <property type="project" value="UniProtKB-SubCell"/>
</dbReference>
<dbReference type="GO" id="GO:0005634">
    <property type="term" value="C:nucleus"/>
    <property type="evidence" value="ECO:0000318"/>
    <property type="project" value="GO_Central"/>
</dbReference>
<dbReference type="GO" id="GO:0003700">
    <property type="term" value="F:DNA-binding transcription factor activity"/>
    <property type="evidence" value="ECO:0000318"/>
    <property type="project" value="GO_Central"/>
</dbReference>
<dbReference type="GO" id="GO:0070888">
    <property type="term" value="F:E-box binding"/>
    <property type="evidence" value="ECO:0000318"/>
    <property type="project" value="GO_Central"/>
</dbReference>
<dbReference type="GO" id="GO:0046983">
    <property type="term" value="F:protein dimerization activity"/>
    <property type="evidence" value="ECO:0007669"/>
    <property type="project" value="InterPro"/>
</dbReference>
<dbReference type="GO" id="GO:0009653">
    <property type="term" value="P:anatomical structure morphogenesis"/>
    <property type="evidence" value="ECO:0000318"/>
    <property type="project" value="GO_Central"/>
</dbReference>
<dbReference type="GO" id="GO:0030154">
    <property type="term" value="P:cell differentiation"/>
    <property type="evidence" value="ECO:0007669"/>
    <property type="project" value="UniProtKB-KW"/>
</dbReference>
<dbReference type="GO" id="GO:0007507">
    <property type="term" value="P:heart development"/>
    <property type="evidence" value="ECO:0000316"/>
    <property type="project" value="ZFIN"/>
</dbReference>
<dbReference type="GO" id="GO:0001947">
    <property type="term" value="P:heart looping"/>
    <property type="evidence" value="ECO:0000315"/>
    <property type="project" value="UniProtKB"/>
</dbReference>
<dbReference type="GO" id="GO:0007399">
    <property type="term" value="P:nervous system development"/>
    <property type="evidence" value="ECO:0007669"/>
    <property type="project" value="UniProtKB-KW"/>
</dbReference>
<dbReference type="GO" id="GO:0045944">
    <property type="term" value="P:positive regulation of transcription by RNA polymerase II"/>
    <property type="evidence" value="ECO:0000318"/>
    <property type="project" value="GO_Central"/>
</dbReference>
<dbReference type="GO" id="GO:0061074">
    <property type="term" value="P:regulation of neural retina development"/>
    <property type="evidence" value="ECO:0000315"/>
    <property type="project" value="ZFIN"/>
</dbReference>
<dbReference type="GO" id="GO:2001014">
    <property type="term" value="P:regulation of skeletal muscle cell differentiation"/>
    <property type="evidence" value="ECO:0000315"/>
    <property type="project" value="ZFIN"/>
</dbReference>
<dbReference type="GO" id="GO:0048797">
    <property type="term" value="P:swim bladder formation"/>
    <property type="evidence" value="ECO:0000315"/>
    <property type="project" value="UniProtKB"/>
</dbReference>
<dbReference type="CDD" id="cd11421">
    <property type="entry name" value="bHLH_TS_ATOH8"/>
    <property type="match status" value="1"/>
</dbReference>
<dbReference type="FunFam" id="4.10.280.10:FF:000052">
    <property type="entry name" value="Protein atonal homolog 8"/>
    <property type="match status" value="1"/>
</dbReference>
<dbReference type="Gene3D" id="4.10.280.10">
    <property type="entry name" value="Helix-loop-helix DNA-binding domain"/>
    <property type="match status" value="1"/>
</dbReference>
<dbReference type="InterPro" id="IPR032660">
    <property type="entry name" value="ATOH8_bHLH"/>
</dbReference>
<dbReference type="InterPro" id="IPR011598">
    <property type="entry name" value="bHLH_dom"/>
</dbReference>
<dbReference type="InterPro" id="IPR050359">
    <property type="entry name" value="bHLH_transcription_factors"/>
</dbReference>
<dbReference type="InterPro" id="IPR036638">
    <property type="entry name" value="HLH_DNA-bd_sf"/>
</dbReference>
<dbReference type="PANTHER" id="PTHR19290">
    <property type="entry name" value="BASIC HELIX-LOOP-HELIX PROTEIN NEUROGENIN-RELATED"/>
    <property type="match status" value="1"/>
</dbReference>
<dbReference type="PANTHER" id="PTHR19290:SF102">
    <property type="entry name" value="TRANSCRIPTION FACTOR ATOH8"/>
    <property type="match status" value="1"/>
</dbReference>
<dbReference type="Pfam" id="PF00010">
    <property type="entry name" value="HLH"/>
    <property type="match status" value="1"/>
</dbReference>
<dbReference type="SMART" id="SM00353">
    <property type="entry name" value="HLH"/>
    <property type="match status" value="1"/>
</dbReference>
<dbReference type="SUPFAM" id="SSF47459">
    <property type="entry name" value="HLH, helix-loop-helix DNA-binding domain"/>
    <property type="match status" value="1"/>
</dbReference>
<dbReference type="PROSITE" id="PS50888">
    <property type="entry name" value="BHLH"/>
    <property type="match status" value="1"/>
</dbReference>
<name>ATOH8_DANRE</name>
<comment type="function">
    <text evidence="1 5 6">Transcription factor that binds a palindromic (canonical) core consensus DNA sequence 5'-CANNTG- 3' known as an E-box element, possibly as a heterodimer with other bHLH proteins (By similarity). During development, is required for heart looping and swim bladder formation by acting in concert with GATA4 and ZFPM1 (PubMed:23836893). During the development of both the retina and skeletal muscles is required for neural retinal cell through modulating PAX6 and NEUROG3 expression and myogenic differentiation (PubMed:20532172).</text>
</comment>
<comment type="subcellular location">
    <subcellularLocation>
        <location evidence="2">Nucleus</location>
    </subcellularLocation>
    <subcellularLocation>
        <location evidence="1">Nucleus speckle</location>
    </subcellularLocation>
    <subcellularLocation>
        <location evidence="2">Cytoplasm</location>
    </subcellularLocation>
</comment>
<comment type="developmental stage">
    <text evidence="5 6">Weakly expressed in the heart tube at 30 hours post-fertilization (PubMed:23836893). Expressed at as early as epiboly stage, and is broadly distributed till early segmentation stage and in developing retina and skeletal muscle. In the eye, expression is detected in the optic primordium at the 6-somite stage and is steadily expressed during the invagination of the optic vesicle from its initiation to its expansion to the lens rudiment. In skeletal muscle, a faint signal is detected in muscle precursor cells at the early segmentation period, and in ventral somites from the 21-somite to 24 hour post fertilization stage. Expression decreases sharply during 36 to 48 hour post fertilization stage while it reaches its highest level at about 72 hour post fertilization stage. During this period, the distribution extends to the dorsal somites. In addition also appeared in the brain and neural crest cell (PubMed:20532172).</text>
</comment>
<comment type="disruption phenotype">
    <text evidence="5">Morpholino knockdown of atoh8 causes two phenotypes. The severe phenotype displays a shrunken head, reduced eye size and fused somites and most embryos die within 3 days. The mild phenotype displays an abnormal brain shape with smaller eyes, a curved body axis with indistinct somite boundaries and frequently reduced or no circulation. In addition, the yolk extension is hardly visible starting at the beginning of tail straightening from the 17-somite stage.</text>
</comment>
<comment type="caution">
    <text evidence="3">Contains a degenerate basic motif not likely to bind DNA.</text>
</comment>
<accession>D2CLZ9</accession>
<proteinExistence type="evidence at transcript level"/>
<sequence>MKNPHLNSPCKILNTVSGDKKMKRKAREPIKHVSEDHYPYFKLYKNPHLMAETLGDGSPQETHRSEIITSRDDSVRNDVLNTAVDMRINTITAAEVPDSKLRSVSEKTVNSKIVQASPQVSVLSAPQVFPLERVVLSQRAASQAPAGGSERAESPRKRAGEPSGVVTEIKAIQQTRRLLANARERTRVHTISAAFEALRKQVPCYSYGQKLSKLAILRIACNYILSLAQLADLDYTPDHRNMSFRECVEQCTRTLQAEGRSKKRKE</sequence>
<protein>
    <recommendedName>
        <fullName evidence="7">Transcription factor atoh8</fullName>
    </recommendedName>
    <alternativeName>
        <fullName evidence="8">Atonal bHLH transcription factor 8</fullName>
    </alternativeName>
    <alternativeName>
        <fullName evidence="8">Protein atonal homolog 8</fullName>
    </alternativeName>
</protein>